<accession>A1TYM2</accession>
<sequence>MQRSVHELLTPRTIDVKESSATRAKVTLEPLERGFGHTLGSALRRILLSSMPGCAVTEAQIDGVLHEYSAIEGVQEDVIEILLNLKGVAVKMNGRDDAELTLSKKGPGVVTAGDIKLDHDVEIANPEHVICHLSENGEVNMRLRVARGRGYEPADQRGLDEDETRAIGRLQLDATFSPVRRVAYAVESARVEQRTDLDKLVIDLETNGTIDPEEAIRRAATILQQQLAVFVDFDHEKEPERVEEEEEIDPILLRPVDDLELTVRSANCLKAENIYYIGDLIQRTEVELLKTPNLGKKSLTEIKDVLASRGLSLGMRLDNWPPASLRGDDRVLGG</sequence>
<protein>
    <recommendedName>
        <fullName evidence="1">DNA-directed RNA polymerase subunit alpha</fullName>
        <shortName evidence="1">RNAP subunit alpha</shortName>
        <ecNumber evidence="1">2.7.7.6</ecNumber>
    </recommendedName>
    <alternativeName>
        <fullName evidence="1">RNA polymerase subunit alpha</fullName>
    </alternativeName>
    <alternativeName>
        <fullName evidence="1">Transcriptase subunit alpha</fullName>
    </alternativeName>
</protein>
<name>RPOA_MARN8</name>
<evidence type="ECO:0000255" key="1">
    <source>
        <dbReference type="HAMAP-Rule" id="MF_00059"/>
    </source>
</evidence>
<organism>
    <name type="scientific">Marinobacter nauticus (strain ATCC 700491 / DSM 11845 / VT8)</name>
    <name type="common">Marinobacter aquaeolei</name>
    <dbReference type="NCBI Taxonomy" id="351348"/>
    <lineage>
        <taxon>Bacteria</taxon>
        <taxon>Pseudomonadati</taxon>
        <taxon>Pseudomonadota</taxon>
        <taxon>Gammaproteobacteria</taxon>
        <taxon>Pseudomonadales</taxon>
        <taxon>Marinobacteraceae</taxon>
        <taxon>Marinobacter</taxon>
    </lineage>
</organism>
<feature type="chain" id="PRO_0000296831" description="DNA-directed RNA polymerase subunit alpha">
    <location>
        <begin position="1"/>
        <end position="334"/>
    </location>
</feature>
<feature type="region of interest" description="Alpha N-terminal domain (alpha-NTD)" evidence="1">
    <location>
        <begin position="1"/>
        <end position="234"/>
    </location>
</feature>
<feature type="region of interest" description="Alpha C-terminal domain (alpha-CTD)" evidence="1">
    <location>
        <begin position="248"/>
        <end position="334"/>
    </location>
</feature>
<proteinExistence type="inferred from homology"/>
<gene>
    <name evidence="1" type="primary">rpoA</name>
    <name type="ordered locus">Maqu_0744</name>
</gene>
<reference key="1">
    <citation type="journal article" date="2011" name="Appl. Environ. Microbiol.">
        <title>Genomic potential of Marinobacter aquaeolei, a biogeochemical 'opportunitroph'.</title>
        <authorList>
            <person name="Singer E."/>
            <person name="Webb E.A."/>
            <person name="Nelson W.C."/>
            <person name="Heidelberg J.F."/>
            <person name="Ivanova N."/>
            <person name="Pati A."/>
            <person name="Edwards K.J."/>
        </authorList>
    </citation>
    <scope>NUCLEOTIDE SEQUENCE [LARGE SCALE GENOMIC DNA]</scope>
    <source>
        <strain>ATCC 700491 / DSM 11845 / VT8</strain>
    </source>
</reference>
<dbReference type="EC" id="2.7.7.6" evidence="1"/>
<dbReference type="EMBL" id="CP000514">
    <property type="protein sequence ID" value="ABM17841.1"/>
    <property type="molecule type" value="Genomic_DNA"/>
</dbReference>
<dbReference type="RefSeq" id="WP_008174911.1">
    <property type="nucleotide sequence ID" value="NC_008740.1"/>
</dbReference>
<dbReference type="SMR" id="A1TYM2"/>
<dbReference type="STRING" id="351348.Maqu_0744"/>
<dbReference type="KEGG" id="maq:Maqu_0744"/>
<dbReference type="eggNOG" id="COG0202">
    <property type="taxonomic scope" value="Bacteria"/>
</dbReference>
<dbReference type="HOGENOM" id="CLU_053084_0_0_6"/>
<dbReference type="OrthoDB" id="9805706at2"/>
<dbReference type="Proteomes" id="UP000000998">
    <property type="component" value="Chromosome"/>
</dbReference>
<dbReference type="GO" id="GO:0005737">
    <property type="term" value="C:cytoplasm"/>
    <property type="evidence" value="ECO:0007669"/>
    <property type="project" value="UniProtKB-ARBA"/>
</dbReference>
<dbReference type="GO" id="GO:0000428">
    <property type="term" value="C:DNA-directed RNA polymerase complex"/>
    <property type="evidence" value="ECO:0007669"/>
    <property type="project" value="UniProtKB-KW"/>
</dbReference>
<dbReference type="GO" id="GO:0003677">
    <property type="term" value="F:DNA binding"/>
    <property type="evidence" value="ECO:0007669"/>
    <property type="project" value="UniProtKB-UniRule"/>
</dbReference>
<dbReference type="GO" id="GO:0003899">
    <property type="term" value="F:DNA-directed RNA polymerase activity"/>
    <property type="evidence" value="ECO:0007669"/>
    <property type="project" value="UniProtKB-UniRule"/>
</dbReference>
<dbReference type="GO" id="GO:0046983">
    <property type="term" value="F:protein dimerization activity"/>
    <property type="evidence" value="ECO:0007669"/>
    <property type="project" value="InterPro"/>
</dbReference>
<dbReference type="GO" id="GO:0006351">
    <property type="term" value="P:DNA-templated transcription"/>
    <property type="evidence" value="ECO:0007669"/>
    <property type="project" value="UniProtKB-UniRule"/>
</dbReference>
<dbReference type="CDD" id="cd06928">
    <property type="entry name" value="RNAP_alpha_NTD"/>
    <property type="match status" value="1"/>
</dbReference>
<dbReference type="FunFam" id="1.10.150.20:FF:000001">
    <property type="entry name" value="DNA-directed RNA polymerase subunit alpha"/>
    <property type="match status" value="1"/>
</dbReference>
<dbReference type="FunFam" id="2.170.120.12:FF:000001">
    <property type="entry name" value="DNA-directed RNA polymerase subunit alpha"/>
    <property type="match status" value="1"/>
</dbReference>
<dbReference type="Gene3D" id="1.10.150.20">
    <property type="entry name" value="5' to 3' exonuclease, C-terminal subdomain"/>
    <property type="match status" value="1"/>
</dbReference>
<dbReference type="Gene3D" id="2.170.120.12">
    <property type="entry name" value="DNA-directed RNA polymerase, insert domain"/>
    <property type="match status" value="1"/>
</dbReference>
<dbReference type="Gene3D" id="3.30.1360.10">
    <property type="entry name" value="RNA polymerase, RBP11-like subunit"/>
    <property type="match status" value="1"/>
</dbReference>
<dbReference type="HAMAP" id="MF_00059">
    <property type="entry name" value="RNApol_bact_RpoA"/>
    <property type="match status" value="1"/>
</dbReference>
<dbReference type="InterPro" id="IPR011262">
    <property type="entry name" value="DNA-dir_RNA_pol_insert"/>
</dbReference>
<dbReference type="InterPro" id="IPR011263">
    <property type="entry name" value="DNA-dir_RNA_pol_RpoA/D/Rpb3"/>
</dbReference>
<dbReference type="InterPro" id="IPR011773">
    <property type="entry name" value="DNA-dir_RpoA"/>
</dbReference>
<dbReference type="InterPro" id="IPR036603">
    <property type="entry name" value="RBP11-like"/>
</dbReference>
<dbReference type="InterPro" id="IPR011260">
    <property type="entry name" value="RNAP_asu_C"/>
</dbReference>
<dbReference type="InterPro" id="IPR036643">
    <property type="entry name" value="RNApol_insert_sf"/>
</dbReference>
<dbReference type="NCBIfam" id="NF003513">
    <property type="entry name" value="PRK05182.1-2"/>
    <property type="match status" value="1"/>
</dbReference>
<dbReference type="NCBIfam" id="NF003519">
    <property type="entry name" value="PRK05182.2-5"/>
    <property type="match status" value="1"/>
</dbReference>
<dbReference type="NCBIfam" id="TIGR02027">
    <property type="entry name" value="rpoA"/>
    <property type="match status" value="1"/>
</dbReference>
<dbReference type="Pfam" id="PF01000">
    <property type="entry name" value="RNA_pol_A_bac"/>
    <property type="match status" value="1"/>
</dbReference>
<dbReference type="Pfam" id="PF03118">
    <property type="entry name" value="RNA_pol_A_CTD"/>
    <property type="match status" value="1"/>
</dbReference>
<dbReference type="Pfam" id="PF01193">
    <property type="entry name" value="RNA_pol_L"/>
    <property type="match status" value="1"/>
</dbReference>
<dbReference type="SMART" id="SM00662">
    <property type="entry name" value="RPOLD"/>
    <property type="match status" value="1"/>
</dbReference>
<dbReference type="SUPFAM" id="SSF47789">
    <property type="entry name" value="C-terminal domain of RNA polymerase alpha subunit"/>
    <property type="match status" value="1"/>
</dbReference>
<dbReference type="SUPFAM" id="SSF56553">
    <property type="entry name" value="Insert subdomain of RNA polymerase alpha subunit"/>
    <property type="match status" value="1"/>
</dbReference>
<dbReference type="SUPFAM" id="SSF55257">
    <property type="entry name" value="RBP11-like subunits of RNA polymerase"/>
    <property type="match status" value="1"/>
</dbReference>
<keyword id="KW-0240">DNA-directed RNA polymerase</keyword>
<keyword id="KW-0548">Nucleotidyltransferase</keyword>
<keyword id="KW-0804">Transcription</keyword>
<keyword id="KW-0808">Transferase</keyword>
<comment type="function">
    <text evidence="1">DNA-dependent RNA polymerase catalyzes the transcription of DNA into RNA using the four ribonucleoside triphosphates as substrates.</text>
</comment>
<comment type="catalytic activity">
    <reaction evidence="1">
        <text>RNA(n) + a ribonucleoside 5'-triphosphate = RNA(n+1) + diphosphate</text>
        <dbReference type="Rhea" id="RHEA:21248"/>
        <dbReference type="Rhea" id="RHEA-COMP:14527"/>
        <dbReference type="Rhea" id="RHEA-COMP:17342"/>
        <dbReference type="ChEBI" id="CHEBI:33019"/>
        <dbReference type="ChEBI" id="CHEBI:61557"/>
        <dbReference type="ChEBI" id="CHEBI:140395"/>
        <dbReference type="EC" id="2.7.7.6"/>
    </reaction>
</comment>
<comment type="subunit">
    <text evidence="1">Homodimer. The RNAP catalytic core consists of 2 alpha, 1 beta, 1 beta' and 1 omega subunit. When a sigma factor is associated with the core the holoenzyme is formed, which can initiate transcription.</text>
</comment>
<comment type="domain">
    <text evidence="1">The N-terminal domain is essential for RNAP assembly and basal transcription, whereas the C-terminal domain is involved in interaction with transcriptional regulators and with upstream promoter elements.</text>
</comment>
<comment type="similarity">
    <text evidence="1">Belongs to the RNA polymerase alpha chain family.</text>
</comment>